<protein>
    <recommendedName>
        <fullName evidence="2">D-alanine--D-alanine ligase</fullName>
        <ecNumber evidence="2">6.3.2.4</ecNumber>
    </recommendedName>
    <alternativeName>
        <fullName evidence="2">D-Ala-D-Ala ligase</fullName>
    </alternativeName>
    <alternativeName>
        <fullName evidence="2">D-alanylalanine synthetase</fullName>
    </alternativeName>
</protein>
<accession>Q4L7W2</accession>
<dbReference type="EC" id="6.3.2.4" evidence="2"/>
<dbReference type="EMBL" id="AP006716">
    <property type="protein sequence ID" value="BAE04263.1"/>
    <property type="molecule type" value="Genomic_DNA"/>
</dbReference>
<dbReference type="RefSeq" id="WP_011275263.1">
    <property type="nucleotide sequence ID" value="NC_007168.1"/>
</dbReference>
<dbReference type="SMR" id="Q4L7W2"/>
<dbReference type="KEGG" id="sha:SH0954"/>
<dbReference type="eggNOG" id="COG1181">
    <property type="taxonomic scope" value="Bacteria"/>
</dbReference>
<dbReference type="HOGENOM" id="CLU_039268_0_0_9"/>
<dbReference type="OrthoDB" id="9813261at2"/>
<dbReference type="UniPathway" id="UPA00219"/>
<dbReference type="Proteomes" id="UP000000543">
    <property type="component" value="Chromosome"/>
</dbReference>
<dbReference type="GO" id="GO:0005829">
    <property type="term" value="C:cytosol"/>
    <property type="evidence" value="ECO:0007669"/>
    <property type="project" value="TreeGrafter"/>
</dbReference>
<dbReference type="GO" id="GO:0005524">
    <property type="term" value="F:ATP binding"/>
    <property type="evidence" value="ECO:0007669"/>
    <property type="project" value="UniProtKB-KW"/>
</dbReference>
<dbReference type="GO" id="GO:0008716">
    <property type="term" value="F:D-alanine-D-alanine ligase activity"/>
    <property type="evidence" value="ECO:0007669"/>
    <property type="project" value="UniProtKB-UniRule"/>
</dbReference>
<dbReference type="GO" id="GO:0046872">
    <property type="term" value="F:metal ion binding"/>
    <property type="evidence" value="ECO:0007669"/>
    <property type="project" value="UniProtKB-KW"/>
</dbReference>
<dbReference type="GO" id="GO:0071555">
    <property type="term" value="P:cell wall organization"/>
    <property type="evidence" value="ECO:0007669"/>
    <property type="project" value="UniProtKB-KW"/>
</dbReference>
<dbReference type="GO" id="GO:0009252">
    <property type="term" value="P:peptidoglycan biosynthetic process"/>
    <property type="evidence" value="ECO:0007669"/>
    <property type="project" value="UniProtKB-UniRule"/>
</dbReference>
<dbReference type="GO" id="GO:0008360">
    <property type="term" value="P:regulation of cell shape"/>
    <property type="evidence" value="ECO:0007669"/>
    <property type="project" value="UniProtKB-KW"/>
</dbReference>
<dbReference type="FunFam" id="3.30.1490.20:FF:000007">
    <property type="entry name" value="D-alanine--D-alanine ligase"/>
    <property type="match status" value="1"/>
</dbReference>
<dbReference type="FunFam" id="3.30.470.20:FF:000008">
    <property type="entry name" value="D-alanine--D-alanine ligase"/>
    <property type="match status" value="1"/>
</dbReference>
<dbReference type="Gene3D" id="3.40.50.20">
    <property type="match status" value="1"/>
</dbReference>
<dbReference type="Gene3D" id="3.30.1490.20">
    <property type="entry name" value="ATP-grasp fold, A domain"/>
    <property type="match status" value="1"/>
</dbReference>
<dbReference type="Gene3D" id="3.30.470.20">
    <property type="entry name" value="ATP-grasp fold, B domain"/>
    <property type="match status" value="1"/>
</dbReference>
<dbReference type="HAMAP" id="MF_00047">
    <property type="entry name" value="Dala_Dala_lig"/>
    <property type="match status" value="1"/>
</dbReference>
<dbReference type="InterPro" id="IPR011761">
    <property type="entry name" value="ATP-grasp"/>
</dbReference>
<dbReference type="InterPro" id="IPR013815">
    <property type="entry name" value="ATP_grasp_subdomain_1"/>
</dbReference>
<dbReference type="InterPro" id="IPR000291">
    <property type="entry name" value="D-Ala_lig_Van_CS"/>
</dbReference>
<dbReference type="InterPro" id="IPR005905">
    <property type="entry name" value="D_ala_D_ala"/>
</dbReference>
<dbReference type="InterPro" id="IPR011095">
    <property type="entry name" value="Dala_Dala_lig_C"/>
</dbReference>
<dbReference type="InterPro" id="IPR011127">
    <property type="entry name" value="Dala_Dala_lig_N"/>
</dbReference>
<dbReference type="InterPro" id="IPR016185">
    <property type="entry name" value="PreATP-grasp_dom_sf"/>
</dbReference>
<dbReference type="NCBIfam" id="TIGR01205">
    <property type="entry name" value="D_ala_D_alaTIGR"/>
    <property type="match status" value="1"/>
</dbReference>
<dbReference type="NCBIfam" id="NF002526">
    <property type="entry name" value="PRK01966.1-2"/>
    <property type="match status" value="1"/>
</dbReference>
<dbReference type="NCBIfam" id="NF002528">
    <property type="entry name" value="PRK01966.1-4"/>
    <property type="match status" value="1"/>
</dbReference>
<dbReference type="PANTHER" id="PTHR23132">
    <property type="entry name" value="D-ALANINE--D-ALANINE LIGASE"/>
    <property type="match status" value="1"/>
</dbReference>
<dbReference type="PANTHER" id="PTHR23132:SF25">
    <property type="entry name" value="D-ALANINE--D-ALANINE LIGASE A"/>
    <property type="match status" value="1"/>
</dbReference>
<dbReference type="Pfam" id="PF07478">
    <property type="entry name" value="Dala_Dala_lig_C"/>
    <property type="match status" value="1"/>
</dbReference>
<dbReference type="Pfam" id="PF01820">
    <property type="entry name" value="Dala_Dala_lig_N"/>
    <property type="match status" value="1"/>
</dbReference>
<dbReference type="PIRSF" id="PIRSF039102">
    <property type="entry name" value="Ddl/VanB"/>
    <property type="match status" value="1"/>
</dbReference>
<dbReference type="SUPFAM" id="SSF56059">
    <property type="entry name" value="Glutathione synthetase ATP-binding domain-like"/>
    <property type="match status" value="1"/>
</dbReference>
<dbReference type="SUPFAM" id="SSF52440">
    <property type="entry name" value="PreATP-grasp domain"/>
    <property type="match status" value="1"/>
</dbReference>
<dbReference type="PROSITE" id="PS50975">
    <property type="entry name" value="ATP_GRASP"/>
    <property type="match status" value="1"/>
</dbReference>
<dbReference type="PROSITE" id="PS00843">
    <property type="entry name" value="DALA_DALA_LIGASE_1"/>
    <property type="match status" value="1"/>
</dbReference>
<dbReference type="PROSITE" id="PS00844">
    <property type="entry name" value="DALA_DALA_LIGASE_2"/>
    <property type="match status" value="1"/>
</dbReference>
<keyword id="KW-0067">ATP-binding</keyword>
<keyword id="KW-0133">Cell shape</keyword>
<keyword id="KW-0961">Cell wall biogenesis/degradation</keyword>
<keyword id="KW-0963">Cytoplasm</keyword>
<keyword id="KW-0436">Ligase</keyword>
<keyword id="KW-0460">Magnesium</keyword>
<keyword id="KW-0464">Manganese</keyword>
<keyword id="KW-0479">Metal-binding</keyword>
<keyword id="KW-0547">Nucleotide-binding</keyword>
<keyword id="KW-0573">Peptidoglycan synthesis</keyword>
<feature type="chain" id="PRO_1000030496" description="D-alanine--D-alanine ligase">
    <location>
        <begin position="1"/>
        <end position="356"/>
    </location>
</feature>
<feature type="domain" description="ATP-grasp" evidence="2">
    <location>
        <begin position="134"/>
        <end position="339"/>
    </location>
</feature>
<feature type="binding site" evidence="2">
    <location>
        <begin position="167"/>
        <end position="222"/>
    </location>
    <ligand>
        <name>ATP</name>
        <dbReference type="ChEBI" id="CHEBI:30616"/>
    </ligand>
</feature>
<feature type="binding site" evidence="2">
    <location>
        <position position="293"/>
    </location>
    <ligand>
        <name>Mg(2+)</name>
        <dbReference type="ChEBI" id="CHEBI:18420"/>
        <label>1</label>
    </ligand>
</feature>
<feature type="binding site" evidence="2">
    <location>
        <position position="306"/>
    </location>
    <ligand>
        <name>Mg(2+)</name>
        <dbReference type="ChEBI" id="CHEBI:18420"/>
        <label>1</label>
    </ligand>
</feature>
<feature type="binding site" evidence="2">
    <location>
        <position position="306"/>
    </location>
    <ligand>
        <name>Mg(2+)</name>
        <dbReference type="ChEBI" id="CHEBI:18420"/>
        <label>2</label>
    </ligand>
</feature>
<feature type="binding site" evidence="2">
    <location>
        <position position="308"/>
    </location>
    <ligand>
        <name>Mg(2+)</name>
        <dbReference type="ChEBI" id="CHEBI:18420"/>
        <label>2</label>
    </ligand>
</feature>
<organism>
    <name type="scientific">Staphylococcus haemolyticus (strain JCSC1435)</name>
    <dbReference type="NCBI Taxonomy" id="279808"/>
    <lineage>
        <taxon>Bacteria</taxon>
        <taxon>Bacillati</taxon>
        <taxon>Bacillota</taxon>
        <taxon>Bacilli</taxon>
        <taxon>Bacillales</taxon>
        <taxon>Staphylococcaceae</taxon>
        <taxon>Staphylococcus</taxon>
    </lineage>
</organism>
<name>DDL_STAHJ</name>
<sequence length="356" mass="40221">MVKENICIVYGGKSAEHDVSKLTAQNVLNAIDKERYLVDIIYITNDGLWKKKENITEEIKEIESLNMTDIEAGEITILLKESSNGKPYDAIFPLLHGPNGEDGTIQGLFEVLDLPYVGNGVLAASSSMDKLVMKQLFEHRGLPQLPYISFLRSEYEKYEGNIIKLVKDKLTYPVFVKPANLGSSVGISKCNNEDELKSGIEEAFQFDRKLVIEQGINAREVEVAVLGNDYPETTWPGEVIKDVAFYDYKSKYKDGKISLQIPAELDEEVQMTLRNMALEAFKATDCSGLVRADFFVTEDNQIFINETNAMPGFTAFSMYPSLWENMGLSYSDLITKLIDLAKERHEDKKKNKYTID</sequence>
<evidence type="ECO:0000250" key="1"/>
<evidence type="ECO:0000255" key="2">
    <source>
        <dbReference type="HAMAP-Rule" id="MF_00047"/>
    </source>
</evidence>
<gene>
    <name evidence="2" type="primary">ddl</name>
    <name type="ordered locus">SH0954</name>
</gene>
<comment type="function">
    <text evidence="2">Cell wall formation.</text>
</comment>
<comment type="catalytic activity">
    <reaction evidence="2">
        <text>2 D-alanine + ATP = D-alanyl-D-alanine + ADP + phosphate + H(+)</text>
        <dbReference type="Rhea" id="RHEA:11224"/>
        <dbReference type="ChEBI" id="CHEBI:15378"/>
        <dbReference type="ChEBI" id="CHEBI:30616"/>
        <dbReference type="ChEBI" id="CHEBI:43474"/>
        <dbReference type="ChEBI" id="CHEBI:57416"/>
        <dbReference type="ChEBI" id="CHEBI:57822"/>
        <dbReference type="ChEBI" id="CHEBI:456216"/>
        <dbReference type="EC" id="6.3.2.4"/>
    </reaction>
</comment>
<comment type="cofactor">
    <cofactor evidence="1">
        <name>Mg(2+)</name>
        <dbReference type="ChEBI" id="CHEBI:18420"/>
    </cofactor>
    <cofactor evidence="1">
        <name>Mn(2+)</name>
        <dbReference type="ChEBI" id="CHEBI:29035"/>
    </cofactor>
    <text evidence="1">Binds 2 magnesium or manganese ions per subunit.</text>
</comment>
<comment type="pathway">
    <text evidence="2">Cell wall biogenesis; peptidoglycan biosynthesis.</text>
</comment>
<comment type="subcellular location">
    <subcellularLocation>
        <location evidence="2">Cytoplasm</location>
    </subcellularLocation>
</comment>
<comment type="similarity">
    <text evidence="2">Belongs to the D-alanine--D-alanine ligase family.</text>
</comment>
<reference key="1">
    <citation type="journal article" date="2005" name="J. Bacteriol.">
        <title>Whole-genome sequencing of Staphylococcus haemolyticus uncovers the extreme plasticity of its genome and the evolution of human-colonizing staphylococcal species.</title>
        <authorList>
            <person name="Takeuchi F."/>
            <person name="Watanabe S."/>
            <person name="Baba T."/>
            <person name="Yuzawa H."/>
            <person name="Ito T."/>
            <person name="Morimoto Y."/>
            <person name="Kuroda M."/>
            <person name="Cui L."/>
            <person name="Takahashi M."/>
            <person name="Ankai A."/>
            <person name="Baba S."/>
            <person name="Fukui S."/>
            <person name="Lee J.C."/>
            <person name="Hiramatsu K."/>
        </authorList>
    </citation>
    <scope>NUCLEOTIDE SEQUENCE [LARGE SCALE GENOMIC DNA]</scope>
    <source>
        <strain>JCSC1435</strain>
    </source>
</reference>
<proteinExistence type="inferred from homology"/>